<name>AROL_PHOLL</name>
<gene>
    <name evidence="1" type="primary">aroL</name>
    <name type="ordered locus">plu1245</name>
</gene>
<proteinExistence type="inferred from homology"/>
<reference key="1">
    <citation type="journal article" date="2003" name="Nat. Biotechnol.">
        <title>The genome sequence of the entomopathogenic bacterium Photorhabdus luminescens.</title>
        <authorList>
            <person name="Duchaud E."/>
            <person name="Rusniok C."/>
            <person name="Frangeul L."/>
            <person name="Buchrieser C."/>
            <person name="Givaudan A."/>
            <person name="Taourit S."/>
            <person name="Bocs S."/>
            <person name="Boursaux-Eude C."/>
            <person name="Chandler M."/>
            <person name="Charles J.-F."/>
            <person name="Dassa E."/>
            <person name="Derose R."/>
            <person name="Derzelle S."/>
            <person name="Freyssinet G."/>
            <person name="Gaudriault S."/>
            <person name="Medigue C."/>
            <person name="Lanois A."/>
            <person name="Powell K."/>
            <person name="Siguier P."/>
            <person name="Vincent R."/>
            <person name="Wingate V."/>
            <person name="Zouine M."/>
            <person name="Glaser P."/>
            <person name="Boemare N."/>
            <person name="Danchin A."/>
            <person name="Kunst F."/>
        </authorList>
    </citation>
    <scope>NUCLEOTIDE SEQUENCE [LARGE SCALE GENOMIC DNA]</scope>
    <source>
        <strain>DSM 15139 / CIP 105565 / TT01</strain>
    </source>
</reference>
<sequence>MNQILFIVGARGAGKTTVGKLLANELSYTFIDTDHHIQQTSNMTIADIVNQQGWQQFRQLESQALQQVTQINRVISTGGGIILSAENRQYMRQNGTVIYLQASASILAERLMQQPESTQRPSLTGKSIVEEMEEVLAARENLYCECANHIINAHLSPEKITTYVKEIMFSGIVS</sequence>
<protein>
    <recommendedName>
        <fullName evidence="1">Shikimate kinase 2</fullName>
        <shortName evidence="1">SK 2</shortName>
        <ecNumber evidence="1">2.7.1.71</ecNumber>
    </recommendedName>
</protein>
<accession>Q7N7B0</accession>
<feature type="chain" id="PRO_0000237907" description="Shikimate kinase 2">
    <location>
        <begin position="1"/>
        <end position="174"/>
    </location>
</feature>
<feature type="region of interest" description="LID domain">
    <location>
        <begin position="112"/>
        <end position="126"/>
    </location>
</feature>
<feature type="binding site" evidence="1">
    <location>
        <begin position="12"/>
        <end position="17"/>
    </location>
    <ligand>
        <name>ATP</name>
        <dbReference type="ChEBI" id="CHEBI:30616"/>
    </ligand>
</feature>
<feature type="binding site" evidence="1">
    <location>
        <position position="16"/>
    </location>
    <ligand>
        <name>Mg(2+)</name>
        <dbReference type="ChEBI" id="CHEBI:18420"/>
    </ligand>
</feature>
<feature type="binding site" evidence="1">
    <location>
        <position position="32"/>
    </location>
    <ligand>
        <name>Mg(2+)</name>
        <dbReference type="ChEBI" id="CHEBI:18420"/>
    </ligand>
</feature>
<feature type="binding site" evidence="1">
    <location>
        <position position="34"/>
    </location>
    <ligand>
        <name>substrate</name>
    </ligand>
</feature>
<feature type="binding site" evidence="1">
    <location>
        <position position="58"/>
    </location>
    <ligand>
        <name>substrate</name>
    </ligand>
</feature>
<feature type="binding site" evidence="1">
    <location>
        <position position="79"/>
    </location>
    <ligand>
        <name>substrate</name>
    </ligand>
</feature>
<feature type="binding site" evidence="1">
    <location>
        <position position="120"/>
    </location>
    <ligand>
        <name>ATP</name>
        <dbReference type="ChEBI" id="CHEBI:30616"/>
    </ligand>
</feature>
<feature type="binding site" evidence="1">
    <location>
        <position position="139"/>
    </location>
    <ligand>
        <name>substrate</name>
    </ligand>
</feature>
<evidence type="ECO:0000255" key="1">
    <source>
        <dbReference type="HAMAP-Rule" id="MF_01269"/>
    </source>
</evidence>
<organism>
    <name type="scientific">Photorhabdus laumondii subsp. laumondii (strain DSM 15139 / CIP 105565 / TT01)</name>
    <name type="common">Photorhabdus luminescens subsp. laumondii</name>
    <dbReference type="NCBI Taxonomy" id="243265"/>
    <lineage>
        <taxon>Bacteria</taxon>
        <taxon>Pseudomonadati</taxon>
        <taxon>Pseudomonadota</taxon>
        <taxon>Gammaproteobacteria</taxon>
        <taxon>Enterobacterales</taxon>
        <taxon>Morganellaceae</taxon>
        <taxon>Photorhabdus</taxon>
    </lineage>
</organism>
<dbReference type="EC" id="2.7.1.71" evidence="1"/>
<dbReference type="EMBL" id="BX571863">
    <property type="protein sequence ID" value="CAE13539.1"/>
    <property type="molecule type" value="Genomic_DNA"/>
</dbReference>
<dbReference type="RefSeq" id="WP_011145570.1">
    <property type="nucleotide sequence ID" value="NC_005126.1"/>
</dbReference>
<dbReference type="SMR" id="Q7N7B0"/>
<dbReference type="STRING" id="243265.plu1245"/>
<dbReference type="GeneID" id="48847515"/>
<dbReference type="KEGG" id="plu:plu1245"/>
<dbReference type="eggNOG" id="COG0703">
    <property type="taxonomic scope" value="Bacteria"/>
</dbReference>
<dbReference type="HOGENOM" id="CLU_057607_4_3_6"/>
<dbReference type="OrthoDB" id="9800332at2"/>
<dbReference type="UniPathway" id="UPA00053">
    <property type="reaction ID" value="UER00088"/>
</dbReference>
<dbReference type="Proteomes" id="UP000002514">
    <property type="component" value="Chromosome"/>
</dbReference>
<dbReference type="GO" id="GO:0005829">
    <property type="term" value="C:cytosol"/>
    <property type="evidence" value="ECO:0007669"/>
    <property type="project" value="TreeGrafter"/>
</dbReference>
<dbReference type="GO" id="GO:0005524">
    <property type="term" value="F:ATP binding"/>
    <property type="evidence" value="ECO:0007669"/>
    <property type="project" value="UniProtKB-UniRule"/>
</dbReference>
<dbReference type="GO" id="GO:0000287">
    <property type="term" value="F:magnesium ion binding"/>
    <property type="evidence" value="ECO:0007669"/>
    <property type="project" value="UniProtKB-UniRule"/>
</dbReference>
<dbReference type="GO" id="GO:0004765">
    <property type="term" value="F:shikimate kinase activity"/>
    <property type="evidence" value="ECO:0007669"/>
    <property type="project" value="UniProtKB-UniRule"/>
</dbReference>
<dbReference type="GO" id="GO:0008652">
    <property type="term" value="P:amino acid biosynthetic process"/>
    <property type="evidence" value="ECO:0007669"/>
    <property type="project" value="UniProtKB-KW"/>
</dbReference>
<dbReference type="GO" id="GO:0009073">
    <property type="term" value="P:aromatic amino acid family biosynthetic process"/>
    <property type="evidence" value="ECO:0007669"/>
    <property type="project" value="UniProtKB-KW"/>
</dbReference>
<dbReference type="GO" id="GO:0009423">
    <property type="term" value="P:chorismate biosynthetic process"/>
    <property type="evidence" value="ECO:0007669"/>
    <property type="project" value="UniProtKB-UniRule"/>
</dbReference>
<dbReference type="CDD" id="cd00464">
    <property type="entry name" value="SK"/>
    <property type="match status" value="1"/>
</dbReference>
<dbReference type="Gene3D" id="3.40.50.300">
    <property type="entry name" value="P-loop containing nucleotide triphosphate hydrolases"/>
    <property type="match status" value="1"/>
</dbReference>
<dbReference type="HAMAP" id="MF_00109">
    <property type="entry name" value="Shikimate_kinase"/>
    <property type="match status" value="1"/>
</dbReference>
<dbReference type="HAMAP" id="MF_01269">
    <property type="entry name" value="Shikimate_kinase_2"/>
    <property type="match status" value="1"/>
</dbReference>
<dbReference type="InterPro" id="IPR027417">
    <property type="entry name" value="P-loop_NTPase"/>
</dbReference>
<dbReference type="InterPro" id="IPR031322">
    <property type="entry name" value="Shikimate/glucono_kinase"/>
</dbReference>
<dbReference type="InterPro" id="IPR000623">
    <property type="entry name" value="Shikimate_kinase/TSH1"/>
</dbReference>
<dbReference type="InterPro" id="IPR027544">
    <property type="entry name" value="Shikimate_kinase_2"/>
</dbReference>
<dbReference type="InterPro" id="IPR023000">
    <property type="entry name" value="Shikimate_kinase_CS"/>
</dbReference>
<dbReference type="NCBIfam" id="NF002988">
    <property type="entry name" value="PRK03731.1"/>
    <property type="match status" value="1"/>
</dbReference>
<dbReference type="PANTHER" id="PTHR21087">
    <property type="entry name" value="SHIKIMATE KINASE"/>
    <property type="match status" value="1"/>
</dbReference>
<dbReference type="PANTHER" id="PTHR21087:SF21">
    <property type="entry name" value="SHIKIMATE KINASE 2"/>
    <property type="match status" value="1"/>
</dbReference>
<dbReference type="Pfam" id="PF01202">
    <property type="entry name" value="SKI"/>
    <property type="match status" value="1"/>
</dbReference>
<dbReference type="PRINTS" id="PR01100">
    <property type="entry name" value="SHIKIMTKNASE"/>
</dbReference>
<dbReference type="SUPFAM" id="SSF52540">
    <property type="entry name" value="P-loop containing nucleoside triphosphate hydrolases"/>
    <property type="match status" value="1"/>
</dbReference>
<dbReference type="PROSITE" id="PS01128">
    <property type="entry name" value="SHIKIMATE_KINASE"/>
    <property type="match status" value="1"/>
</dbReference>
<comment type="function">
    <text evidence="1">Catalyzes the specific phosphorylation of the 3-hydroxyl group of shikimic acid using ATP as a cosubstrate.</text>
</comment>
<comment type="catalytic activity">
    <reaction evidence="1">
        <text>shikimate + ATP = 3-phosphoshikimate + ADP + H(+)</text>
        <dbReference type="Rhea" id="RHEA:13121"/>
        <dbReference type="ChEBI" id="CHEBI:15378"/>
        <dbReference type="ChEBI" id="CHEBI:30616"/>
        <dbReference type="ChEBI" id="CHEBI:36208"/>
        <dbReference type="ChEBI" id="CHEBI:145989"/>
        <dbReference type="ChEBI" id="CHEBI:456216"/>
        <dbReference type="EC" id="2.7.1.71"/>
    </reaction>
</comment>
<comment type="cofactor">
    <cofactor evidence="1">
        <name>Mg(2+)</name>
        <dbReference type="ChEBI" id="CHEBI:18420"/>
    </cofactor>
    <text evidence="1">Binds 1 Mg(2+) ion per subunit.</text>
</comment>
<comment type="pathway">
    <text evidence="1">Metabolic intermediate biosynthesis; chorismate biosynthesis; chorismate from D-erythrose 4-phosphate and phosphoenolpyruvate: step 5/7.</text>
</comment>
<comment type="subunit">
    <text evidence="1">Monomer.</text>
</comment>
<comment type="subcellular location">
    <subcellularLocation>
        <location evidence="1">Cytoplasm</location>
    </subcellularLocation>
</comment>
<comment type="domain">
    <text evidence="1">The LID domain closes over the active site upon ATP binding.</text>
</comment>
<comment type="similarity">
    <text evidence="1">Belongs to the shikimate kinase family. AroL subfamily.</text>
</comment>
<keyword id="KW-0028">Amino-acid biosynthesis</keyword>
<keyword id="KW-0057">Aromatic amino acid biosynthesis</keyword>
<keyword id="KW-0067">ATP-binding</keyword>
<keyword id="KW-0963">Cytoplasm</keyword>
<keyword id="KW-0418">Kinase</keyword>
<keyword id="KW-0460">Magnesium</keyword>
<keyword id="KW-0479">Metal-binding</keyword>
<keyword id="KW-0547">Nucleotide-binding</keyword>
<keyword id="KW-1185">Reference proteome</keyword>
<keyword id="KW-0808">Transferase</keyword>